<organism>
    <name type="scientific">Caenorhabditis elegans</name>
    <dbReference type="NCBI Taxonomy" id="6239"/>
    <lineage>
        <taxon>Eukaryota</taxon>
        <taxon>Metazoa</taxon>
        <taxon>Ecdysozoa</taxon>
        <taxon>Nematoda</taxon>
        <taxon>Chromadorea</taxon>
        <taxon>Rhabditida</taxon>
        <taxon>Rhabditina</taxon>
        <taxon>Rhabditomorpha</taxon>
        <taxon>Rhabditoidea</taxon>
        <taxon>Rhabditidae</taxon>
        <taxon>Peloderinae</taxon>
        <taxon>Caenorhabditis</taxon>
    </lineage>
</organism>
<name>TBX2_CAEEL</name>
<comment type="function">
    <text evidence="3 4 5 6">Involved in the transcriptional regulation of genes required for the development of pharyngeal muscles derived from the ABa lineage (PubMed:16701625, PubMed:23933492). Acts as a transcriptional repressor and binds to T-box binding sites in its own promoter to negatively autoregulate its own expression in neurons, seam cells and the gut in order to restrict its expression to certain tissues (PubMed:25873636). May function together with the nfya-1-NF-Y complex to repress its own expression (PubMed:25873636). Plays a role in neural fate specification in the hermaphrodite-specific neuron (HSN)/PHB neuron lineage, acting in concert with homeobox protein egl-5 and the asymmetric cell division protein ham-1.</text>
</comment>
<comment type="subcellular location">
    <subcellularLocation>
        <location evidence="1 3">Nucleus</location>
    </subcellularLocation>
</comment>
<comment type="tissue specificity">
    <text evidence="3 5 6">Expressed in body wall muscles and a subset of pharyngeal neurons. Expressed in head neurons and occassionally tail neurons (PubMed:23933492, PubMed:25873636). Not expressed in the pharynx (PubMed:23933492).</text>
</comment>
<comment type="developmental stage">
    <text evidence="3 5 6">First expressed in embryos at the 100-cell stage (PubMed:16701625). First expressed in pharyngeal precursors at the 100-200 cell stage and expression continues in the pharynx until near hatching, when expression becomes restricted to several neurons in the head (PubMed:23933492, PubMed:25873636). In larval stages, expressed in head neurons and occasionally tail neurons (PubMed:23933492). In L4 larvae, expressed in the gut and seam cells (PubMed:23933492). In larval stages, not expressed in the pharynx (PubMed:23933492).</text>
</comment>
<comment type="PTM">
    <text evidence="3">Sumoylated.</text>
</comment>
<comment type="disruption phenotype">
    <text evidence="5">RNAi-mediated knockdown results in 70% lethality at the larval stages (PubMed:23933492). RNAi-mediated knockdown enhances the larval lethality phenotype of the nfyb-1 cu13 mutant (PubMed:23933492).</text>
</comment>
<keyword id="KW-0217">Developmental protein</keyword>
<keyword id="KW-0238">DNA-binding</keyword>
<keyword id="KW-0539">Nucleus</keyword>
<keyword id="KW-1185">Reference proteome</keyword>
<keyword id="KW-0678">Repressor</keyword>
<keyword id="KW-0804">Transcription</keyword>
<keyword id="KW-0805">Transcription regulation</keyword>
<keyword id="KW-0832">Ubl conjugation</keyword>
<feature type="chain" id="PRO_0000184469" description="T-box protein 2">
    <location>
        <begin position="1"/>
        <end position="423"/>
    </location>
</feature>
<feature type="DNA-binding region" description="T-box" evidence="1">
    <location>
        <begin position="70"/>
        <end position="243"/>
    </location>
</feature>
<feature type="region of interest" description="Disordered" evidence="2">
    <location>
        <begin position="238"/>
        <end position="324"/>
    </location>
</feature>
<feature type="region of interest" description="Disordered" evidence="2">
    <location>
        <begin position="384"/>
        <end position="423"/>
    </location>
</feature>
<feature type="compositionally biased region" description="Polar residues" evidence="2">
    <location>
        <begin position="261"/>
        <end position="283"/>
    </location>
</feature>
<feature type="compositionally biased region" description="Low complexity" evidence="2">
    <location>
        <begin position="302"/>
        <end position="317"/>
    </location>
</feature>
<feature type="compositionally biased region" description="Basic and acidic residues" evidence="2">
    <location>
        <begin position="394"/>
        <end position="404"/>
    </location>
</feature>
<feature type="mutagenesis site" description="In bx59; results in 44-50% lethality at the larval stages. Morphological defects in the pharynx. Increases tbx-2 expression in head neurons and in the syncytial head hypodermal cell hyp6. 98% lethality at the L1 larval stage in a nfyb-1 mutant (cu13) background, which may be due to increased tbx-2 promoter activity." evidence="5 6">
    <original>H</original>
    <variation>Y</variation>
    <location>
        <position position="145"/>
    </location>
</feature>
<sequence length="423" mass="46997">MAFNPFALGRPDLLLPFMGAGVGGPGAGGPPPNLFFSMLQAGFPPGPVGSPPEDDGVTDDPKVELDERELWQQFSQCGTEMVITKSGRRIFPAYRVKISGLDKKSQYFVMMDLVPADEHRYKFNNSRWMIAGKADPEMPKTLYIHPDSPSTGEHWMSKGANFHKLKLTNNISDKHGYTILNSMHKYQPRLHVVRCADRHNLMYSTFRTFVFRETEFIAVTAYQNEKVTELKIENNPFAKGFRDAGAGKREKKRQLHRMNGDATQSPPGKTASLPTHSPHPSESNSEDDEPTLKKCKPEPSQTPTTSSLSTSTTPTLSAHHPLRSPQFCIPPPIDMMYQNMPMDLLAHWQMATLFPQFSMALNSPAAAASLLSKHLAKASSECKVEATSEDSEEAEKPEVKKEQKSVTPPKKGGFDVLDLLSKP</sequence>
<evidence type="ECO:0000255" key="1">
    <source>
        <dbReference type="PROSITE-ProRule" id="PRU00201"/>
    </source>
</evidence>
<evidence type="ECO:0000256" key="2">
    <source>
        <dbReference type="SAM" id="MobiDB-lite"/>
    </source>
</evidence>
<evidence type="ECO:0000269" key="3">
    <source>
    </source>
</evidence>
<evidence type="ECO:0000269" key="4">
    <source>
    </source>
</evidence>
<evidence type="ECO:0000269" key="5">
    <source>
    </source>
</evidence>
<evidence type="ECO:0000269" key="6">
    <source>
    </source>
</evidence>
<evidence type="ECO:0000312" key="7">
    <source>
        <dbReference type="WormBase" id="F21H11.3"/>
    </source>
</evidence>
<proteinExistence type="evidence at protein level"/>
<protein>
    <recommendedName>
        <fullName>T-box protein 2</fullName>
    </recommendedName>
</protein>
<dbReference type="EMBL" id="BX284603">
    <property type="protein sequence ID" value="CCD69847.1"/>
    <property type="molecule type" value="Genomic_DNA"/>
</dbReference>
<dbReference type="PIR" id="B88450">
    <property type="entry name" value="B88450"/>
</dbReference>
<dbReference type="PIR" id="D56530">
    <property type="entry name" value="D56530"/>
</dbReference>
<dbReference type="RefSeq" id="NP_001370674.1">
    <property type="nucleotide sequence ID" value="NM_001382860.2"/>
</dbReference>
<dbReference type="RefSeq" id="NP_498088.1">
    <property type="nucleotide sequence ID" value="NM_065687.3"/>
</dbReference>
<dbReference type="SMR" id="Q19691"/>
<dbReference type="BioGRID" id="40929">
    <property type="interactions" value="3"/>
</dbReference>
<dbReference type="FunCoup" id="Q19691">
    <property type="interactions" value="102"/>
</dbReference>
<dbReference type="STRING" id="6239.F21H11.3.1"/>
<dbReference type="PaxDb" id="6239-F21H11.3"/>
<dbReference type="PeptideAtlas" id="Q19691"/>
<dbReference type="EnsemblMetazoa" id="F21H11.3.1">
    <property type="protein sequence ID" value="F21H11.3.1"/>
    <property type="gene ID" value="WBGene00006543"/>
</dbReference>
<dbReference type="GeneID" id="175698"/>
<dbReference type="UCSC" id="F21H11.3.2">
    <property type="organism name" value="c. elegans"/>
</dbReference>
<dbReference type="AGR" id="WB:WBGene00006543"/>
<dbReference type="WormBase" id="F21H11.3">
    <property type="protein sequence ID" value="CE01245"/>
    <property type="gene ID" value="WBGene00006543"/>
    <property type="gene designation" value="tbx-2"/>
</dbReference>
<dbReference type="eggNOG" id="KOG3585">
    <property type="taxonomic scope" value="Eukaryota"/>
</dbReference>
<dbReference type="GeneTree" id="ENSGT00940000163374"/>
<dbReference type="HOGENOM" id="CLU_024824_3_0_1"/>
<dbReference type="InParanoid" id="Q19691"/>
<dbReference type="OMA" id="LMYSTFR"/>
<dbReference type="OrthoDB" id="7442607at2759"/>
<dbReference type="PhylomeDB" id="Q19691"/>
<dbReference type="Reactome" id="R-CEL-9856649">
    <property type="pathway name" value="Transcriptional and post-translational regulation of MITF-M expression and activity"/>
</dbReference>
<dbReference type="PRO" id="PR:Q19691"/>
<dbReference type="Proteomes" id="UP000001940">
    <property type="component" value="Chromosome III"/>
</dbReference>
<dbReference type="Bgee" id="WBGene00006543">
    <property type="expression patterns" value="Expressed in pharyngeal muscle cell (C elegans) and 3 other cell types or tissues"/>
</dbReference>
<dbReference type="GO" id="GO:0000785">
    <property type="term" value="C:chromatin"/>
    <property type="evidence" value="ECO:0000318"/>
    <property type="project" value="GO_Central"/>
</dbReference>
<dbReference type="GO" id="GO:0005737">
    <property type="term" value="C:cytoplasm"/>
    <property type="evidence" value="ECO:0000314"/>
    <property type="project" value="WormBase"/>
</dbReference>
<dbReference type="GO" id="GO:0005634">
    <property type="term" value="C:nucleus"/>
    <property type="evidence" value="ECO:0000314"/>
    <property type="project" value="WormBase"/>
</dbReference>
<dbReference type="GO" id="GO:0005667">
    <property type="term" value="C:transcription regulator complex"/>
    <property type="evidence" value="ECO:0000250"/>
    <property type="project" value="WormBase"/>
</dbReference>
<dbReference type="GO" id="GO:0001046">
    <property type="term" value="F:core promoter sequence-specific DNA binding"/>
    <property type="evidence" value="ECO:0000314"/>
    <property type="project" value="UniProtKB"/>
</dbReference>
<dbReference type="GO" id="GO:0003700">
    <property type="term" value="F:DNA-binding transcription factor activity"/>
    <property type="evidence" value="ECO:0000250"/>
    <property type="project" value="WormBase"/>
</dbReference>
<dbReference type="GO" id="GO:0000981">
    <property type="term" value="F:DNA-binding transcription factor activity, RNA polymerase II-specific"/>
    <property type="evidence" value="ECO:0000318"/>
    <property type="project" value="GO_Central"/>
</dbReference>
<dbReference type="GO" id="GO:0001217">
    <property type="term" value="F:DNA-binding transcription repressor activity"/>
    <property type="evidence" value="ECO:0000314"/>
    <property type="project" value="UniProtKB"/>
</dbReference>
<dbReference type="GO" id="GO:0019899">
    <property type="term" value="F:enzyme binding"/>
    <property type="evidence" value="ECO:0000353"/>
    <property type="project" value="WormBase"/>
</dbReference>
<dbReference type="GO" id="GO:0000978">
    <property type="term" value="F:RNA polymerase II cis-regulatory region sequence-specific DNA binding"/>
    <property type="evidence" value="ECO:0000318"/>
    <property type="project" value="GO_Central"/>
</dbReference>
<dbReference type="GO" id="GO:0001708">
    <property type="term" value="P:cell fate specification"/>
    <property type="evidence" value="ECO:0000315"/>
    <property type="project" value="UniProtKB"/>
</dbReference>
<dbReference type="GO" id="GO:0040011">
    <property type="term" value="P:locomotion"/>
    <property type="evidence" value="ECO:0000315"/>
    <property type="project" value="WormBase"/>
</dbReference>
<dbReference type="GO" id="GO:0042694">
    <property type="term" value="P:muscle cell fate specification"/>
    <property type="evidence" value="ECO:0000315"/>
    <property type="project" value="WormBase"/>
</dbReference>
<dbReference type="GO" id="GO:0002119">
    <property type="term" value="P:nematode larval development"/>
    <property type="evidence" value="ECO:0000315"/>
    <property type="project" value="WormBase"/>
</dbReference>
<dbReference type="GO" id="GO:0160096">
    <property type="term" value="P:nematode pharyngeal muscle development"/>
    <property type="evidence" value="ECO:0000315"/>
    <property type="project" value="UniProtKB"/>
</dbReference>
<dbReference type="GO" id="GO:0051402">
    <property type="term" value="P:neuron apoptotic process"/>
    <property type="evidence" value="ECO:0000315"/>
    <property type="project" value="UniProtKB"/>
</dbReference>
<dbReference type="GO" id="GO:0001764">
    <property type="term" value="P:neuron migration"/>
    <property type="evidence" value="ECO:0000315"/>
    <property type="project" value="UniProtKB"/>
</dbReference>
<dbReference type="GO" id="GO:0042048">
    <property type="term" value="P:olfactory behavior"/>
    <property type="evidence" value="ECO:0000315"/>
    <property type="project" value="WormBase"/>
</dbReference>
<dbReference type="GO" id="GO:0045893">
    <property type="term" value="P:positive regulation of DNA-templated transcription"/>
    <property type="evidence" value="ECO:0007669"/>
    <property type="project" value="InterPro"/>
</dbReference>
<dbReference type="GO" id="GO:0010468">
    <property type="term" value="P:regulation of gene expression"/>
    <property type="evidence" value="ECO:0000315"/>
    <property type="project" value="UniProtKB"/>
</dbReference>
<dbReference type="GO" id="GO:0032880">
    <property type="term" value="P:regulation of protein localization"/>
    <property type="evidence" value="ECO:0000315"/>
    <property type="project" value="WormBase"/>
</dbReference>
<dbReference type="GO" id="GO:0006357">
    <property type="term" value="P:regulation of transcription by RNA polymerase II"/>
    <property type="evidence" value="ECO:0000250"/>
    <property type="project" value="WormBase"/>
</dbReference>
<dbReference type="CDD" id="cd20188">
    <property type="entry name" value="T-box_TBX2_3-like"/>
    <property type="match status" value="1"/>
</dbReference>
<dbReference type="FunFam" id="2.60.40.820:FF:000016">
    <property type="entry name" value="T-box transcription factor TBX2-A"/>
    <property type="match status" value="1"/>
</dbReference>
<dbReference type="Gene3D" id="2.60.40.820">
    <property type="entry name" value="Transcription factor, T-box"/>
    <property type="match status" value="1"/>
</dbReference>
<dbReference type="InterPro" id="IPR008967">
    <property type="entry name" value="p53-like_TF_DNA-bd_sf"/>
</dbReference>
<dbReference type="InterPro" id="IPR046360">
    <property type="entry name" value="T-box_DNA-bd"/>
</dbReference>
<dbReference type="InterPro" id="IPR036960">
    <property type="entry name" value="T-box_sf"/>
</dbReference>
<dbReference type="InterPro" id="IPR002070">
    <property type="entry name" value="TF_Brachyury"/>
</dbReference>
<dbReference type="InterPro" id="IPR001699">
    <property type="entry name" value="TF_T-box"/>
</dbReference>
<dbReference type="InterPro" id="IPR018186">
    <property type="entry name" value="TF_T-box_CS"/>
</dbReference>
<dbReference type="PANTHER" id="PTHR11267:SF181">
    <property type="entry name" value="OPTOMOTOR-BLIND PROTEIN"/>
    <property type="match status" value="1"/>
</dbReference>
<dbReference type="PANTHER" id="PTHR11267">
    <property type="entry name" value="T-BOX PROTEIN-RELATED"/>
    <property type="match status" value="1"/>
</dbReference>
<dbReference type="Pfam" id="PF00907">
    <property type="entry name" value="T-box"/>
    <property type="match status" value="1"/>
</dbReference>
<dbReference type="PRINTS" id="PR00938">
    <property type="entry name" value="BRACHYURY"/>
</dbReference>
<dbReference type="PRINTS" id="PR00937">
    <property type="entry name" value="TBOX"/>
</dbReference>
<dbReference type="SMART" id="SM00425">
    <property type="entry name" value="TBOX"/>
    <property type="match status" value="1"/>
</dbReference>
<dbReference type="SUPFAM" id="SSF49417">
    <property type="entry name" value="p53-like transcription factors"/>
    <property type="match status" value="1"/>
</dbReference>
<dbReference type="PROSITE" id="PS01283">
    <property type="entry name" value="TBOX_1"/>
    <property type="match status" value="1"/>
</dbReference>
<dbReference type="PROSITE" id="PS01264">
    <property type="entry name" value="TBOX_2"/>
    <property type="match status" value="1"/>
</dbReference>
<dbReference type="PROSITE" id="PS50252">
    <property type="entry name" value="TBOX_3"/>
    <property type="match status" value="1"/>
</dbReference>
<gene>
    <name evidence="7" type="primary">tbx-2</name>
    <name evidence="7" type="ORF">F21H11.3</name>
</gene>
<reference key="1">
    <citation type="journal article" date="1995" name="Genomics">
        <title>Conservation of the T-box gene family from Mus musculus to Caenorhabditis elegans.</title>
        <authorList>
            <person name="Agulnik S.I."/>
            <person name="Bollag R.J."/>
            <person name="Silver L.M."/>
        </authorList>
    </citation>
    <scope>NUCLEOTIDE SEQUENCE [GENOMIC DNA]</scope>
</reference>
<reference key="2">
    <citation type="journal article" date="1998" name="Science">
        <title>Genome sequence of the nematode C. elegans: a platform for investigating biology.</title>
        <authorList>
            <consortium name="The C. elegans sequencing consortium"/>
        </authorList>
    </citation>
    <scope>NUCLEOTIDE SEQUENCE [LARGE SCALE GENOMIC DNA]</scope>
    <source>
        <strain>Bristol N2</strain>
    </source>
</reference>
<reference key="3">
    <citation type="journal article" date="2006" name="Dev. Biol.">
        <title>The T-box factor TBX-2 and the SUMO conjugating enzyme UBC-9 are required for ABa-derived pharyngeal muscle in C. elegans.</title>
        <authorList>
            <person name="Roy Chowdhuri S."/>
            <person name="Crum T."/>
            <person name="Woollard A."/>
            <person name="Aslam S."/>
            <person name="Okkema P.G."/>
        </authorList>
    </citation>
    <scope>FUNCTION</scope>
    <scope>TISSUE SPECIFICITY</scope>
    <scope>SUMOYLATION</scope>
    <scope>DEVELOPMENTAL STAGE</scope>
    <scope>SUBCELLULAR LOCATION</scope>
</reference>
<reference key="4">
    <citation type="journal article" date="2008" name="Genetics">
        <title>The T-box gene tbx-2, the homeobox gene egl-5 and the asymmetric cell division gene ham-1 specify neural fate in the HSN/PHB lineage.</title>
        <authorList>
            <person name="Singhvi A."/>
            <person name="Frank C.A."/>
            <person name="Garriga G."/>
        </authorList>
    </citation>
    <scope>FUNCTION</scope>
</reference>
<reference key="5">
    <citation type="journal article" date="2013" name="Dev. Biol.">
        <title>The NF-Y complex negatively regulates Caenorhabditis elegans tbx-2 expression.</title>
        <authorList>
            <person name="Milton A.C."/>
            <person name="Packard A.V."/>
            <person name="Clary L."/>
            <person name="Okkema P.G."/>
        </authorList>
    </citation>
    <scope>FUNCTION</scope>
    <scope>TISSUE SPECIFICITY</scope>
    <scope>DEVELOPMENTAL STAGE</scope>
    <scope>DISRUPTION PHENOTYPE</scope>
    <scope>MUTAGENESIS OF HIS-145</scope>
</reference>
<reference key="6">
    <citation type="journal article" date="2015" name="G3 (Bethesda)">
        <title>Caenorhabditis elegans TBX-2 Directly Regulates Its Own Expression in a Negative Autoregulatory Loop.</title>
        <authorList>
            <person name="Milton A.C."/>
            <person name="Okkema P.G."/>
        </authorList>
    </citation>
    <scope>FUNCTION</scope>
    <scope>TISSUE SPECIFICITY</scope>
    <scope>DEVELOPMENTAL STAGE</scope>
    <scope>MUTAGENESIS OF HIS-145</scope>
</reference>
<accession>Q19691</accession>